<organism evidence="8">
    <name type="scientific">Gallus gallus</name>
    <name type="common">Chicken</name>
    <dbReference type="NCBI Taxonomy" id="9031"/>
    <lineage>
        <taxon>Eukaryota</taxon>
        <taxon>Metazoa</taxon>
        <taxon>Chordata</taxon>
        <taxon>Craniata</taxon>
        <taxon>Vertebrata</taxon>
        <taxon>Euteleostomi</taxon>
        <taxon>Archelosauria</taxon>
        <taxon>Archosauria</taxon>
        <taxon>Dinosauria</taxon>
        <taxon>Saurischia</taxon>
        <taxon>Theropoda</taxon>
        <taxon>Coelurosauria</taxon>
        <taxon>Aves</taxon>
        <taxon>Neognathae</taxon>
        <taxon>Galloanserae</taxon>
        <taxon>Galliformes</taxon>
        <taxon>Phasianidae</taxon>
        <taxon>Phasianinae</taxon>
        <taxon>Gallus</taxon>
    </lineage>
</organism>
<name>DISP3_CHICK</name>
<keyword id="KW-0153">Cholesterol metabolism</keyword>
<keyword id="KW-0968">Cytoplasmic vesicle</keyword>
<keyword id="KW-0221">Differentiation</keyword>
<keyword id="KW-0256">Endoplasmic reticulum</keyword>
<keyword id="KW-0443">Lipid metabolism</keyword>
<keyword id="KW-0472">Membrane</keyword>
<keyword id="KW-0539">Nucleus</keyword>
<keyword id="KW-1185">Reference proteome</keyword>
<keyword id="KW-0753">Steroid metabolism</keyword>
<keyword id="KW-1207">Sterol metabolism</keyword>
<keyword id="KW-0812">Transmembrane</keyword>
<keyword id="KW-1133">Transmembrane helix</keyword>
<reference key="1">
    <citation type="journal article" date="2009" name="Mol. Endocrinol.">
        <title>DISP3, a sterol-sensing domain-containing protein that links thyroid hormone action and cholesterol metabolism.</title>
        <authorList>
            <person name="Zikova M."/>
            <person name="Corlett A."/>
            <person name="Bendova Z."/>
            <person name="Pajer P."/>
            <person name="Bartunek P."/>
        </authorList>
    </citation>
    <scope>NUCLEOTIDE SEQUENCE [MRNA]</scope>
    <scope>FUNCTION</scope>
    <scope>SUBCELLULAR LOCATION</scope>
    <scope>DOMAIN</scope>
    <scope>TISSUE SPECIFICITY</scope>
    <scope>INDUCTION</scope>
    <source>
        <tissue>Erythroid cell</tissue>
    </source>
</reference>
<reference key="2">
    <citation type="journal article" date="2004" name="Nature">
        <title>Sequence and comparative analysis of the chicken genome provide unique perspectives on vertebrate evolution.</title>
        <authorList>
            <person name="Hillier L.W."/>
            <person name="Miller W."/>
            <person name="Birney E."/>
            <person name="Warren W."/>
            <person name="Hardison R.C."/>
            <person name="Ponting C.P."/>
            <person name="Bork P."/>
            <person name="Burt D.W."/>
            <person name="Groenen M.A.M."/>
            <person name="Delany M.E."/>
            <person name="Dodgson J.B."/>
            <person name="Chinwalla A.T."/>
            <person name="Cliften P.F."/>
            <person name="Clifton S.W."/>
            <person name="Delehaunty K.D."/>
            <person name="Fronick C."/>
            <person name="Fulton R.S."/>
            <person name="Graves T.A."/>
            <person name="Kremitzki C."/>
            <person name="Layman D."/>
            <person name="Magrini V."/>
            <person name="McPherson J.D."/>
            <person name="Miner T.L."/>
            <person name="Minx P."/>
            <person name="Nash W.E."/>
            <person name="Nhan M.N."/>
            <person name="Nelson J.O."/>
            <person name="Oddy L.G."/>
            <person name="Pohl C.S."/>
            <person name="Randall-Maher J."/>
            <person name="Smith S.M."/>
            <person name="Wallis J.W."/>
            <person name="Yang S.-P."/>
            <person name="Romanov M.N."/>
            <person name="Rondelli C.M."/>
            <person name="Paton B."/>
            <person name="Smith J."/>
            <person name="Morrice D."/>
            <person name="Daniels L."/>
            <person name="Tempest H.G."/>
            <person name="Robertson L."/>
            <person name="Masabanda J.S."/>
            <person name="Griffin D.K."/>
            <person name="Vignal A."/>
            <person name="Fillon V."/>
            <person name="Jacobbson L."/>
            <person name="Kerje S."/>
            <person name="Andersson L."/>
            <person name="Crooijmans R.P."/>
            <person name="Aerts J."/>
            <person name="van der Poel J.J."/>
            <person name="Ellegren H."/>
            <person name="Caldwell R.B."/>
            <person name="Hubbard S.J."/>
            <person name="Grafham D.V."/>
            <person name="Kierzek A.M."/>
            <person name="McLaren S.R."/>
            <person name="Overton I.M."/>
            <person name="Arakawa H."/>
            <person name="Beattie K.J."/>
            <person name="Bezzubov Y."/>
            <person name="Boardman P.E."/>
            <person name="Bonfield J.K."/>
            <person name="Croning M.D.R."/>
            <person name="Davies R.M."/>
            <person name="Francis M.D."/>
            <person name="Humphray S.J."/>
            <person name="Scott C.E."/>
            <person name="Taylor R.G."/>
            <person name="Tickle C."/>
            <person name="Brown W.R.A."/>
            <person name="Rogers J."/>
            <person name="Buerstedde J.-M."/>
            <person name="Wilson S.A."/>
            <person name="Stubbs L."/>
            <person name="Ovcharenko I."/>
            <person name="Gordon L."/>
            <person name="Lucas S."/>
            <person name="Miller M.M."/>
            <person name="Inoko H."/>
            <person name="Shiina T."/>
            <person name="Kaufman J."/>
            <person name="Salomonsen J."/>
            <person name="Skjoedt K."/>
            <person name="Wong G.K.-S."/>
            <person name="Wang J."/>
            <person name="Liu B."/>
            <person name="Wang J."/>
            <person name="Yu J."/>
            <person name="Yang H."/>
            <person name="Nefedov M."/>
            <person name="Koriabine M."/>
            <person name="Dejong P.J."/>
            <person name="Goodstadt L."/>
            <person name="Webber C."/>
            <person name="Dickens N.J."/>
            <person name="Letunic I."/>
            <person name="Suyama M."/>
            <person name="Torrents D."/>
            <person name="von Mering C."/>
            <person name="Zdobnov E.M."/>
            <person name="Makova K."/>
            <person name="Nekrutenko A."/>
            <person name="Elnitski L."/>
            <person name="Eswara P."/>
            <person name="King D.C."/>
            <person name="Yang S.-P."/>
            <person name="Tyekucheva S."/>
            <person name="Radakrishnan A."/>
            <person name="Harris R.S."/>
            <person name="Chiaromonte F."/>
            <person name="Taylor J."/>
            <person name="He J."/>
            <person name="Rijnkels M."/>
            <person name="Griffiths-Jones S."/>
            <person name="Ureta-Vidal A."/>
            <person name="Hoffman M.M."/>
            <person name="Severin J."/>
            <person name="Searle S.M.J."/>
            <person name="Law A.S."/>
            <person name="Speed D."/>
            <person name="Waddington D."/>
            <person name="Cheng Z."/>
            <person name="Tuzun E."/>
            <person name="Eichler E."/>
            <person name="Bao Z."/>
            <person name="Flicek P."/>
            <person name="Shteynberg D.D."/>
            <person name="Brent M.R."/>
            <person name="Bye J.M."/>
            <person name="Huckle E.J."/>
            <person name="Chatterji S."/>
            <person name="Dewey C."/>
            <person name="Pachter L."/>
            <person name="Kouranov A."/>
            <person name="Mourelatos Z."/>
            <person name="Hatzigeorgiou A.G."/>
            <person name="Paterson A.H."/>
            <person name="Ivarie R."/>
            <person name="Brandstrom M."/>
            <person name="Axelsson E."/>
            <person name="Backstrom N."/>
            <person name="Berlin S."/>
            <person name="Webster M.T."/>
            <person name="Pourquie O."/>
            <person name="Reymond A."/>
            <person name="Ucla C."/>
            <person name="Antonarakis S.E."/>
            <person name="Long M."/>
            <person name="Emerson J.J."/>
            <person name="Betran E."/>
            <person name="Dupanloup I."/>
            <person name="Kaessmann H."/>
            <person name="Hinrichs A.S."/>
            <person name="Bejerano G."/>
            <person name="Furey T.S."/>
            <person name="Harte R.A."/>
            <person name="Raney B."/>
            <person name="Siepel A."/>
            <person name="Kent W.J."/>
            <person name="Haussler D."/>
            <person name="Eyras E."/>
            <person name="Castelo R."/>
            <person name="Abril J.F."/>
            <person name="Castellano S."/>
            <person name="Camara F."/>
            <person name="Parra G."/>
            <person name="Guigo R."/>
            <person name="Bourque G."/>
            <person name="Tesler G."/>
            <person name="Pevzner P.A."/>
            <person name="Smit A."/>
            <person name="Fulton L.A."/>
            <person name="Mardis E.R."/>
            <person name="Wilson R.K."/>
        </authorList>
    </citation>
    <scope>NUCLEOTIDE SEQUENCE [LARGE SCALE GENOMIC DNA]</scope>
    <source>
        <strain>Red jungle fowl</strain>
    </source>
</reference>
<comment type="function">
    <text evidence="1 5">Plays a role in neuronal proliferation and differentiation (By similarity). Plays a role in the accumulation of cellular cholesterol (PubMed:19179482). Involved in intracellular lipid droplet formation (PubMed:19179482). May contribute to cholesterol homeostasis in neuronal cells (PubMed:19179482).</text>
</comment>
<comment type="subcellular location">
    <subcellularLocation>
        <location evidence="5">Endoplasmic reticulum membrane</location>
        <topology evidence="7">Multi-pass membrane protein</topology>
    </subcellularLocation>
    <subcellularLocation>
        <location evidence="5">Nucleus membrane</location>
        <topology evidence="7">Multi-pass membrane protein</topology>
    </subcellularLocation>
    <subcellularLocation>
        <location evidence="5">Cytoplasmic vesicle membrane</location>
        <topology evidence="7">Multi-pass membrane protein</topology>
    </subcellularLocation>
    <text evidence="5">Predominantly localized to cholesterol-enriched domains within membranes (PubMed:19179482). Localizes to cytoplasmic punctate vesicular structures (PubMed:19179482).</text>
</comment>
<comment type="tissue specificity">
    <text evidence="5">Expressed in retina, hippocampus and cerebellum (PubMed:19179482). Expressed in the ganglion and bipolar cells of the inner and outer nuclear layers of the retina and in Purkinje cells (at protein level) (PubMed:19179482). Expressed strongly in brain and retina, weakly in testis and bone marrow (PubMed:19179482).</text>
</comment>
<comment type="induction">
    <text evidence="5">Down-regulated by thyroid hormone T3 in retinal ganglion layers during the embryonic development (PubMed:19179482).</text>
</comment>
<comment type="domain">
    <text evidence="5">The SSD (sterol-sensing) domain is necessary for the increase in cellular cholesterol uptake (PubMed:19179482).</text>
</comment>
<comment type="similarity">
    <text evidence="7">Belongs to the patched family.</text>
</comment>
<protein>
    <recommendedName>
        <fullName evidence="1">Protein dispatched homolog 3</fullName>
    </recommendedName>
    <alternativeName>
        <fullName evidence="7">Patched domain-containing protein 2</fullName>
    </alternativeName>
    <alternativeName>
        <fullName evidence="6">Thyroid hormone receptor up-regulated protein 1</fullName>
        <shortName evidence="6">TRUP1</shortName>
    </alternativeName>
</protein>
<gene>
    <name evidence="1" type="primary">DISP3</name>
    <name type="synonym">PTCHD2</name>
</gene>
<evidence type="ECO:0000250" key="1">
    <source>
        <dbReference type="UniProtKB" id="Q9P2K9"/>
    </source>
</evidence>
<evidence type="ECO:0000255" key="2"/>
<evidence type="ECO:0000255" key="3">
    <source>
        <dbReference type="PROSITE-ProRule" id="PRU00199"/>
    </source>
</evidence>
<evidence type="ECO:0000256" key="4">
    <source>
        <dbReference type="SAM" id="MobiDB-lite"/>
    </source>
</evidence>
<evidence type="ECO:0000269" key="5">
    <source>
    </source>
</evidence>
<evidence type="ECO:0000303" key="6">
    <source>
    </source>
</evidence>
<evidence type="ECO:0000305" key="7"/>
<evidence type="ECO:0000312" key="8">
    <source>
        <dbReference type="EMBL" id="ACB78184.1"/>
    </source>
</evidence>
<dbReference type="EMBL" id="EU429800">
    <property type="protein sequence ID" value="ACB78184.1"/>
    <property type="molecule type" value="mRNA"/>
</dbReference>
<dbReference type="EMBL" id="AADN03008029">
    <property type="status" value="NOT_ANNOTATED_CDS"/>
    <property type="molecule type" value="Genomic_DNA"/>
</dbReference>
<dbReference type="RefSeq" id="NP_001186105.1">
    <property type="nucleotide sequence ID" value="NM_001199176.1"/>
</dbReference>
<dbReference type="RefSeq" id="XP_015152410.1">
    <property type="nucleotide sequence ID" value="XM_015296924.1"/>
</dbReference>
<dbReference type="RefSeq" id="XP_015152411.1">
    <property type="nucleotide sequence ID" value="XM_015296925.1"/>
</dbReference>
<dbReference type="RefSeq" id="XP_015152412.1">
    <property type="nucleotide sequence ID" value="XM_015296926.1"/>
</dbReference>
<dbReference type="RefSeq" id="XP_015152413.1">
    <property type="nucleotide sequence ID" value="XM_015296927.1"/>
</dbReference>
<dbReference type="RefSeq" id="XP_015152414.1">
    <property type="nucleotide sequence ID" value="XM_015296928.1"/>
</dbReference>
<dbReference type="RefSeq" id="XP_046787294.1">
    <property type="nucleotide sequence ID" value="XM_046931338.1"/>
</dbReference>
<dbReference type="RefSeq" id="XP_046787295.1">
    <property type="nucleotide sequence ID" value="XM_046931339.1"/>
</dbReference>
<dbReference type="RefSeq" id="XP_046787296.1">
    <property type="nucleotide sequence ID" value="XM_046931340.1"/>
</dbReference>
<dbReference type="RefSeq" id="XP_046787297.1">
    <property type="nucleotide sequence ID" value="XM_046931341.1"/>
</dbReference>
<dbReference type="RefSeq" id="XP_046787298.1">
    <property type="nucleotide sequence ID" value="XM_046931342.1"/>
</dbReference>
<dbReference type="RefSeq" id="XP_046787299.1">
    <property type="nucleotide sequence ID" value="XM_046931343.1"/>
</dbReference>
<dbReference type="RefSeq" id="XP_046787300.1">
    <property type="nucleotide sequence ID" value="XM_046931344.1"/>
</dbReference>
<dbReference type="RefSeq" id="XP_046787301.1">
    <property type="nucleotide sequence ID" value="XM_046931345.1"/>
</dbReference>
<dbReference type="RefSeq" id="XP_046787302.1">
    <property type="nucleotide sequence ID" value="XM_046931346.1"/>
</dbReference>
<dbReference type="RefSeq" id="XP_046787303.1">
    <property type="nucleotide sequence ID" value="XM_046931347.1"/>
</dbReference>
<dbReference type="RefSeq" id="XP_046787304.1">
    <property type="nucleotide sequence ID" value="XM_046931348.1"/>
</dbReference>
<dbReference type="FunCoup" id="B9U3F2">
    <property type="interactions" value="49"/>
</dbReference>
<dbReference type="STRING" id="9031.ENSGALP00000007415"/>
<dbReference type="GlyGen" id="B9U3F2">
    <property type="glycosylation" value="1 site"/>
</dbReference>
<dbReference type="PaxDb" id="9031-ENSGALP00000007415"/>
<dbReference type="GeneID" id="419497"/>
<dbReference type="KEGG" id="gga:419497"/>
<dbReference type="CTD" id="57540"/>
<dbReference type="VEuPathDB" id="HostDB:geneid_419497"/>
<dbReference type="eggNOG" id="KOG3664">
    <property type="taxonomic scope" value="Eukaryota"/>
</dbReference>
<dbReference type="HOGENOM" id="CLU_007038_0_0_1"/>
<dbReference type="InParanoid" id="B9U3F2"/>
<dbReference type="OrthoDB" id="429851at2759"/>
<dbReference type="PhylomeDB" id="B9U3F2"/>
<dbReference type="TreeFam" id="TF331579"/>
<dbReference type="PRO" id="PR:B9U3F2"/>
<dbReference type="Proteomes" id="UP000000539">
    <property type="component" value="Chromosome 21"/>
</dbReference>
<dbReference type="Bgee" id="ENSGALG00000004662">
    <property type="expression patterns" value="Expressed in cerebellum and 12 other cell types or tissues"/>
</dbReference>
<dbReference type="GO" id="GO:0005737">
    <property type="term" value="C:cytoplasm"/>
    <property type="evidence" value="ECO:0000318"/>
    <property type="project" value="GO_Central"/>
</dbReference>
<dbReference type="GO" id="GO:0030659">
    <property type="term" value="C:cytoplasmic vesicle membrane"/>
    <property type="evidence" value="ECO:0007669"/>
    <property type="project" value="UniProtKB-SubCell"/>
</dbReference>
<dbReference type="GO" id="GO:0005783">
    <property type="term" value="C:endoplasmic reticulum"/>
    <property type="evidence" value="ECO:0000314"/>
    <property type="project" value="UniProtKB"/>
</dbReference>
<dbReference type="GO" id="GO:0005789">
    <property type="term" value="C:endoplasmic reticulum membrane"/>
    <property type="evidence" value="ECO:0007669"/>
    <property type="project" value="UniProtKB-SubCell"/>
</dbReference>
<dbReference type="GO" id="GO:0016020">
    <property type="term" value="C:membrane"/>
    <property type="evidence" value="ECO:0000303"/>
    <property type="project" value="UniProtKB"/>
</dbReference>
<dbReference type="GO" id="GO:0031965">
    <property type="term" value="C:nuclear membrane"/>
    <property type="evidence" value="ECO:0000314"/>
    <property type="project" value="UniProtKB"/>
</dbReference>
<dbReference type="GO" id="GO:0030154">
    <property type="term" value="P:cell differentiation"/>
    <property type="evidence" value="ECO:0007669"/>
    <property type="project" value="UniProtKB-KW"/>
</dbReference>
<dbReference type="GO" id="GO:0042632">
    <property type="term" value="P:cholesterol homeostasis"/>
    <property type="evidence" value="ECO:0000314"/>
    <property type="project" value="UniProtKB"/>
</dbReference>
<dbReference type="GO" id="GO:0008203">
    <property type="term" value="P:cholesterol metabolic process"/>
    <property type="evidence" value="ECO:0007669"/>
    <property type="project" value="UniProtKB-KW"/>
</dbReference>
<dbReference type="GO" id="GO:0045665">
    <property type="term" value="P:negative regulation of neuron differentiation"/>
    <property type="evidence" value="ECO:0000250"/>
    <property type="project" value="UniProtKB"/>
</dbReference>
<dbReference type="GO" id="GO:0045834">
    <property type="term" value="P:positive regulation of lipid metabolic process"/>
    <property type="evidence" value="ECO:0000250"/>
    <property type="project" value="UniProtKB"/>
</dbReference>
<dbReference type="GO" id="GO:2000179">
    <property type="term" value="P:positive regulation of neural precursor cell proliferation"/>
    <property type="evidence" value="ECO:0000250"/>
    <property type="project" value="UniProtKB"/>
</dbReference>
<dbReference type="GO" id="GO:0009725">
    <property type="term" value="P:response to hormone"/>
    <property type="evidence" value="ECO:0000270"/>
    <property type="project" value="UniProtKB"/>
</dbReference>
<dbReference type="FunFam" id="1.20.1640.10:FF:000015">
    <property type="entry name" value="Dispatched RND transporter family member 3"/>
    <property type="match status" value="1"/>
</dbReference>
<dbReference type="FunFam" id="1.20.1640.10:FF:000022">
    <property type="entry name" value="Dispatched RND transporter family member 3"/>
    <property type="match status" value="1"/>
</dbReference>
<dbReference type="Gene3D" id="1.20.1640.10">
    <property type="entry name" value="Multidrug efflux transporter AcrB transmembrane domain"/>
    <property type="match status" value="2"/>
</dbReference>
<dbReference type="InterPro" id="IPR042480">
    <property type="entry name" value="DISP3"/>
</dbReference>
<dbReference type="InterPro" id="IPR053954">
    <property type="entry name" value="DUF7023"/>
</dbReference>
<dbReference type="InterPro" id="IPR053958">
    <property type="entry name" value="HMGCR/SNAP/NPC1-like_SSD"/>
</dbReference>
<dbReference type="InterPro" id="IPR000731">
    <property type="entry name" value="SSD"/>
</dbReference>
<dbReference type="PANTHER" id="PTHR46687">
    <property type="entry name" value="PROTEIN DISPATCHED HOMOLOG 3"/>
    <property type="match status" value="1"/>
</dbReference>
<dbReference type="PANTHER" id="PTHR46687:SF1">
    <property type="entry name" value="PROTEIN DISPATCHED HOMOLOG 3"/>
    <property type="match status" value="1"/>
</dbReference>
<dbReference type="Pfam" id="PF22894">
    <property type="entry name" value="DUF7023"/>
    <property type="match status" value="1"/>
</dbReference>
<dbReference type="Pfam" id="PF12349">
    <property type="entry name" value="Sterol-sensing"/>
    <property type="match status" value="1"/>
</dbReference>
<dbReference type="SUPFAM" id="SSF82866">
    <property type="entry name" value="Multidrug efflux transporter AcrB transmembrane domain"/>
    <property type="match status" value="2"/>
</dbReference>
<dbReference type="PROSITE" id="PS50156">
    <property type="entry name" value="SSD"/>
    <property type="match status" value="1"/>
</dbReference>
<feature type="chain" id="PRO_0000436016" description="Protein dispatched homolog 3">
    <location>
        <begin position="1"/>
        <end position="1338"/>
    </location>
</feature>
<feature type="topological domain" description="Cytoplasmic" evidence="7">
    <location>
        <begin position="1"/>
        <end position="67"/>
    </location>
</feature>
<feature type="transmembrane region" description="Helical" evidence="2">
    <location>
        <begin position="68"/>
        <end position="88"/>
    </location>
</feature>
<feature type="topological domain" description="Lumenal" evidence="7">
    <location>
        <begin position="89"/>
        <end position="406"/>
    </location>
</feature>
<feature type="transmembrane region" description="Helical" evidence="2">
    <location>
        <begin position="407"/>
        <end position="427"/>
    </location>
</feature>
<feature type="topological domain" description="Cytoplasmic" evidence="7">
    <location>
        <position position="428"/>
    </location>
</feature>
<feature type="transmembrane region" description="Helical" evidence="2">
    <location>
        <begin position="429"/>
        <end position="449"/>
    </location>
</feature>
<feature type="topological domain" description="Lumenal" evidence="7">
    <location>
        <begin position="450"/>
        <end position="452"/>
    </location>
</feature>
<feature type="transmembrane region" description="Helical" evidence="2">
    <location>
        <begin position="453"/>
        <end position="473"/>
    </location>
</feature>
<feature type="topological domain" description="Cytoplasmic" evidence="7">
    <location>
        <begin position="474"/>
        <end position="517"/>
    </location>
</feature>
<feature type="transmembrane region" description="Helical" evidence="2">
    <location>
        <begin position="518"/>
        <end position="538"/>
    </location>
</feature>
<feature type="topological domain" description="Lumenal" evidence="7">
    <location>
        <position position="539"/>
    </location>
</feature>
<feature type="transmembrane region" description="Helical" evidence="2">
    <location>
        <begin position="540"/>
        <end position="560"/>
    </location>
</feature>
<feature type="topological domain" description="Cytoplasmic" evidence="7">
    <location>
        <begin position="561"/>
        <end position="672"/>
    </location>
</feature>
<feature type="transmembrane region" description="Helical" evidence="2">
    <location>
        <begin position="673"/>
        <end position="693"/>
    </location>
</feature>
<feature type="topological domain" description="Lumenal" evidence="7">
    <location>
        <begin position="694"/>
        <end position="1128"/>
    </location>
</feature>
<feature type="transmembrane region" description="Helical" evidence="2">
    <location>
        <begin position="1129"/>
        <end position="1149"/>
    </location>
</feature>
<feature type="topological domain" description="Cytoplasmic" evidence="7">
    <location>
        <position position="1150"/>
    </location>
</feature>
<feature type="transmembrane region" description="Helical" evidence="2">
    <location>
        <begin position="1151"/>
        <end position="1171"/>
    </location>
</feature>
<feature type="topological domain" description="Lumenal" evidence="7">
    <location>
        <begin position="1172"/>
        <end position="1237"/>
    </location>
</feature>
<feature type="transmembrane region" description="Helical" evidence="2">
    <location>
        <begin position="1238"/>
        <end position="1258"/>
    </location>
</feature>
<feature type="topological domain" description="Cytoplasmic" evidence="7">
    <location>
        <begin position="1259"/>
        <end position="1266"/>
    </location>
</feature>
<feature type="transmembrane region" description="Helical" evidence="2">
    <location>
        <begin position="1267"/>
        <end position="1287"/>
    </location>
</feature>
<feature type="topological domain" description="Lumenal" evidence="7">
    <location>
        <begin position="1288"/>
        <end position="1302"/>
    </location>
</feature>
<feature type="transmembrane region" description="Helical" evidence="2">
    <location>
        <begin position="1303"/>
        <end position="1323"/>
    </location>
</feature>
<feature type="topological domain" description="Cytoplasmic" evidence="7">
    <location>
        <begin position="1324"/>
        <end position="1338"/>
    </location>
</feature>
<feature type="domain" description="SSD" evidence="3">
    <location>
        <begin position="401"/>
        <end position="559"/>
    </location>
</feature>
<feature type="region of interest" description="Disordered" evidence="4">
    <location>
        <begin position="164"/>
        <end position="196"/>
    </location>
</feature>
<feature type="region of interest" description="Disordered" evidence="4">
    <location>
        <begin position="747"/>
        <end position="768"/>
    </location>
</feature>
<proteinExistence type="evidence at protein level"/>
<sequence length="1338" mass="148330">MDTEDDPLLQDAWLDEEDEEVAFSSRKRREGALLCGKSSCRVRPLRVTLPVSGFWNIVGWIFTNPYCAGFILFLGCAIPAVLAVVMFLHYPALDIDISYNAFEIRNHESSQRFDALALALKSQFGSWGRNRRDLADFTSETLQRLIFEQLQQLHLNASHLQVSTRAKRSAPQGRTSSPEPRAHPHPGNETSRVTRGAPRWDYSNTYISANTQTHAHWRIELIFLARGDSENNIFTTERLVTIHEVERKIMDHPRFREFCWKPHEVLKDLPLGSYSYCSPPSSLMTYFFPTERGGKIYYDGMGQDLADIQGSLELAMTHPEFYWYVDEGLSAENKKSSLLRSEILFGAPLPNYYSVEDRWEEQRHKFQNFVVTYVAMLAKQSTSKVQVLYGGTDLFDYEVRRTFNNDMLLAFISSSCIAVLVYILTSCSVFLSFFGIASIGLSCLVALFLYHVVFGIQYLGILNGVAAFVIVGIGVDDVFVFINTYRQATHLKDLRLRMIHTIQTAGKATFFTSLTTAAAYAANIFSQIPAVHDFGLFMSLIVSCCWVAVLFTMPAALGIWTLYVSPLESSCQNSCSQKCTKKSTLHLAEDLFVASEGTSRAGRETLPYLDDDIPLLSVEEEPVSLEMGDVPLVSVMPENLQLPVEKSNRGHLIAHLQELLEHWVLWSAVKSRWVIVGLFLLVLLLSIFFASRLRPASRAPVLFRPDTNIQVLLDLKYNLSAEGISCITCSGLFQEKPHSLQNNFRTSLEKKKRGSASPWGSKGSISDTGQQDLQGTVYISKSRSKGRPAIYRFSLNASIPAPWQMVSPGDGEVPSFQVYRVPFGNFTRKLTACVSTVGLLKQTSPRKWMMTTLSCDSKRGWKFDFSFYVAAKEQQRTRKLYFAQSHKPPYHGRVCVAPPGCLLSSSPDGPTKGILYVPSEKAAPKARLSATSGFNPCMNMGCGKPAVRPLVDTGAMVFVVFGIRGVNRTKNSDNHVIGDMGSVIYDDSFDLFKEIGNLCRLCKAIASNTELVKPGGAQCLPSGYSISSFLQMLHPECKNIPEPNLLPGQLSHGAVGVKDGKVQWISMAFESTTYKGKSSFQTYADYLKWETFLQQQLQLFPEGSALRHGFQTCEHWKQIFMEIIGVQSALYGLILSLVICVAAVAVFTTHILLLLPVLLSILGVVCLVVTIMYWSGWEMGAVEAISLSILVGSSVDYCVHLVEGYLLAGENLPLHHAEDPTACRQWRTIEAIRHVGVAIVSSAVTTVIATVPLFFCIIAPFAKFGKIVALNTGVSILYTLTVSTALLSIMGPGTFTRSRTSCLKAVAGVLLAGLLGLCICLALLKGGFKIPLPNGTAL</sequence>
<accession>B9U3F2</accession>
<accession>F1NH44</accession>